<organism>
    <name type="scientific">Syntrophus aciditrophicus (strain SB)</name>
    <dbReference type="NCBI Taxonomy" id="56780"/>
    <lineage>
        <taxon>Bacteria</taxon>
        <taxon>Pseudomonadati</taxon>
        <taxon>Thermodesulfobacteriota</taxon>
        <taxon>Syntrophia</taxon>
        <taxon>Syntrophales</taxon>
        <taxon>Syntrophaceae</taxon>
        <taxon>Syntrophus</taxon>
    </lineage>
</organism>
<gene>
    <name evidence="1" type="primary">mtaD1</name>
    <name type="ordered locus">SYNAS_14510</name>
    <name type="ORF">SYN_01572</name>
</gene>
<keyword id="KW-0378">Hydrolase</keyword>
<keyword id="KW-0479">Metal-binding</keyword>
<keyword id="KW-1185">Reference proteome</keyword>
<keyword id="KW-0862">Zinc</keyword>
<name>MTAD1_SYNAS</name>
<feature type="chain" id="PRO_0000312462" description="5-methylthioadenosine/S-adenosylhomocysteine deaminase 1">
    <location>
        <begin position="1"/>
        <end position="443"/>
    </location>
</feature>
<feature type="binding site" evidence="1">
    <location>
        <position position="69"/>
    </location>
    <ligand>
        <name>Zn(2+)</name>
        <dbReference type="ChEBI" id="CHEBI:29105"/>
    </ligand>
</feature>
<feature type="binding site" evidence="1">
    <location>
        <position position="71"/>
    </location>
    <ligand>
        <name>Zn(2+)</name>
        <dbReference type="ChEBI" id="CHEBI:29105"/>
    </ligand>
</feature>
<feature type="binding site" evidence="1">
    <location>
        <position position="98"/>
    </location>
    <ligand>
        <name>substrate</name>
    </ligand>
</feature>
<feature type="binding site" evidence="1">
    <location>
        <position position="191"/>
    </location>
    <ligand>
        <name>substrate</name>
    </ligand>
</feature>
<feature type="binding site" evidence="1">
    <location>
        <position position="218"/>
    </location>
    <ligand>
        <name>Zn(2+)</name>
        <dbReference type="ChEBI" id="CHEBI:29105"/>
    </ligand>
</feature>
<feature type="binding site" evidence="1">
    <location>
        <position position="221"/>
    </location>
    <ligand>
        <name>substrate</name>
    </ligand>
</feature>
<feature type="binding site" evidence="1">
    <location>
        <position position="306"/>
    </location>
    <ligand>
        <name>substrate</name>
    </ligand>
</feature>
<feature type="binding site" evidence="1">
    <location>
        <position position="306"/>
    </location>
    <ligand>
        <name>Zn(2+)</name>
        <dbReference type="ChEBI" id="CHEBI:29105"/>
    </ligand>
</feature>
<sequence>MENVDTLILGGTVLCLDETMTRIEDGALAIAGDAIAAVGTEREFRQRFTSRNIVDGKHSLILPGLVNSHTHAAMTCFRGIADDMALMDWLGNYIFPAEARNVDPELVYWGSLLACAEMIKSGTTTFCDMYIFEEETARAAREAGMRCLLGEVLFDFPSPNVKTPQEGLAYTRKLLYRWSGDPLVRIAVEPHALYTCSRSLLLEAGNLATEYQVPLALHLLENSSEKKQLQEKLGQDALSCLRELGLLNERLIAFHCVCLDDEDIETFRDEGCKAVYNPESNMKLASGFAPVSRMLREGICVGLGTDGCASNNNLDLFQEMDTAAKLEKVRHLDPTLMPAETVVRMATCQGARVLGMDGITGCLKAGMKADFILIDLNRPHLTPMYNPYSHLVYTVNGSDVKTVFINGKMVMKDRQLLTFNEEECMQQVRRIAERVRESLKEPV</sequence>
<reference key="1">
    <citation type="journal article" date="2007" name="Proc. Natl. Acad. Sci. U.S.A.">
        <title>The genome of Syntrophus aciditrophicus: life at the thermodynamic limit of microbial growth.</title>
        <authorList>
            <person name="McInerney M.J."/>
            <person name="Rohlin L."/>
            <person name="Mouttaki H."/>
            <person name="Kim U."/>
            <person name="Krupp R.S."/>
            <person name="Rios-Hernandez L."/>
            <person name="Sieber J."/>
            <person name="Struchtemeyer C.G."/>
            <person name="Bhattacharyya A."/>
            <person name="Campbell J.W."/>
            <person name="Gunsalus R.P."/>
        </authorList>
    </citation>
    <scope>NUCLEOTIDE SEQUENCE [LARGE SCALE GENOMIC DNA]</scope>
    <source>
        <strain>SB</strain>
    </source>
</reference>
<proteinExistence type="inferred from homology"/>
<evidence type="ECO:0000255" key="1">
    <source>
        <dbReference type="HAMAP-Rule" id="MF_01281"/>
    </source>
</evidence>
<comment type="function">
    <text evidence="1">Catalyzes the deamination of 5-methylthioadenosine and S-adenosyl-L-homocysteine into 5-methylthioinosine and S-inosyl-L-homocysteine, respectively. Is also able to deaminate adenosine.</text>
</comment>
<comment type="catalytic activity">
    <reaction evidence="1">
        <text>S-adenosyl-L-homocysteine + H2O + H(+) = S-inosyl-L-homocysteine + NH4(+)</text>
        <dbReference type="Rhea" id="RHEA:20716"/>
        <dbReference type="ChEBI" id="CHEBI:15377"/>
        <dbReference type="ChEBI" id="CHEBI:15378"/>
        <dbReference type="ChEBI" id="CHEBI:28938"/>
        <dbReference type="ChEBI" id="CHEBI:57856"/>
        <dbReference type="ChEBI" id="CHEBI:57985"/>
        <dbReference type="EC" id="3.5.4.28"/>
    </reaction>
</comment>
<comment type="catalytic activity">
    <reaction evidence="1">
        <text>S-methyl-5'-thioadenosine + H2O + H(+) = S-methyl-5'-thioinosine + NH4(+)</text>
        <dbReference type="Rhea" id="RHEA:25025"/>
        <dbReference type="ChEBI" id="CHEBI:15377"/>
        <dbReference type="ChEBI" id="CHEBI:15378"/>
        <dbReference type="ChEBI" id="CHEBI:17509"/>
        <dbReference type="ChEBI" id="CHEBI:28938"/>
        <dbReference type="ChEBI" id="CHEBI:48595"/>
        <dbReference type="EC" id="3.5.4.31"/>
    </reaction>
</comment>
<comment type="cofactor">
    <cofactor evidence="1">
        <name>Zn(2+)</name>
        <dbReference type="ChEBI" id="CHEBI:29105"/>
    </cofactor>
    <text evidence="1">Binds 1 zinc ion per subunit.</text>
</comment>
<comment type="similarity">
    <text evidence="1">Belongs to the metallo-dependent hydrolases superfamily. MTA/SAH deaminase family.</text>
</comment>
<dbReference type="EC" id="3.5.4.28" evidence="1"/>
<dbReference type="EC" id="3.5.4.31" evidence="1"/>
<dbReference type="EMBL" id="CP000252">
    <property type="protein sequence ID" value="ABC77330.1"/>
    <property type="molecule type" value="Genomic_DNA"/>
</dbReference>
<dbReference type="RefSeq" id="WP_011417352.1">
    <property type="nucleotide sequence ID" value="NC_007759.1"/>
</dbReference>
<dbReference type="SMR" id="Q2LTB7"/>
<dbReference type="FunCoup" id="Q2LTB7">
    <property type="interactions" value="325"/>
</dbReference>
<dbReference type="STRING" id="56780.SYN_01572"/>
<dbReference type="KEGG" id="sat:SYN_01572"/>
<dbReference type="eggNOG" id="COG0402">
    <property type="taxonomic scope" value="Bacteria"/>
</dbReference>
<dbReference type="HOGENOM" id="CLU_012358_2_1_7"/>
<dbReference type="InParanoid" id="Q2LTB7"/>
<dbReference type="OrthoDB" id="9807210at2"/>
<dbReference type="Proteomes" id="UP000001933">
    <property type="component" value="Chromosome"/>
</dbReference>
<dbReference type="GO" id="GO:0090614">
    <property type="term" value="F:5'-methylthioadenosine deaminase activity"/>
    <property type="evidence" value="ECO:0007669"/>
    <property type="project" value="UniProtKB-UniRule"/>
</dbReference>
<dbReference type="GO" id="GO:0046872">
    <property type="term" value="F:metal ion binding"/>
    <property type="evidence" value="ECO:0007669"/>
    <property type="project" value="UniProtKB-KW"/>
</dbReference>
<dbReference type="GO" id="GO:0050270">
    <property type="term" value="F:S-adenosylhomocysteine deaminase activity"/>
    <property type="evidence" value="ECO:0007669"/>
    <property type="project" value="UniProtKB-UniRule"/>
</dbReference>
<dbReference type="CDD" id="cd01298">
    <property type="entry name" value="ATZ_TRZ_like"/>
    <property type="match status" value="1"/>
</dbReference>
<dbReference type="FunFam" id="3.20.20.140:FF:000014">
    <property type="entry name" value="5-methylthioadenosine/S-adenosylhomocysteine deaminase"/>
    <property type="match status" value="1"/>
</dbReference>
<dbReference type="Gene3D" id="3.20.20.140">
    <property type="entry name" value="Metal-dependent hydrolases"/>
    <property type="match status" value="1"/>
</dbReference>
<dbReference type="Gene3D" id="2.30.40.10">
    <property type="entry name" value="Urease, subunit C, domain 1"/>
    <property type="match status" value="1"/>
</dbReference>
<dbReference type="HAMAP" id="MF_01281">
    <property type="entry name" value="MTA_SAH_deamin"/>
    <property type="match status" value="1"/>
</dbReference>
<dbReference type="InterPro" id="IPR006680">
    <property type="entry name" value="Amidohydro-rel"/>
</dbReference>
<dbReference type="InterPro" id="IPR023512">
    <property type="entry name" value="Deaminase_MtaD/DadD"/>
</dbReference>
<dbReference type="InterPro" id="IPR011059">
    <property type="entry name" value="Metal-dep_hydrolase_composite"/>
</dbReference>
<dbReference type="InterPro" id="IPR032466">
    <property type="entry name" value="Metal_Hydrolase"/>
</dbReference>
<dbReference type="InterPro" id="IPR050287">
    <property type="entry name" value="MTA/SAH_deaminase"/>
</dbReference>
<dbReference type="PANTHER" id="PTHR43794:SF11">
    <property type="entry name" value="AMIDOHYDROLASE-RELATED DOMAIN-CONTAINING PROTEIN"/>
    <property type="match status" value="1"/>
</dbReference>
<dbReference type="PANTHER" id="PTHR43794">
    <property type="entry name" value="AMINOHYDROLASE SSNA-RELATED"/>
    <property type="match status" value="1"/>
</dbReference>
<dbReference type="Pfam" id="PF01979">
    <property type="entry name" value="Amidohydro_1"/>
    <property type="match status" value="1"/>
</dbReference>
<dbReference type="SUPFAM" id="SSF51338">
    <property type="entry name" value="Composite domain of metallo-dependent hydrolases"/>
    <property type="match status" value="1"/>
</dbReference>
<dbReference type="SUPFAM" id="SSF51556">
    <property type="entry name" value="Metallo-dependent hydrolases"/>
    <property type="match status" value="1"/>
</dbReference>
<protein>
    <recommendedName>
        <fullName evidence="1">5-methylthioadenosine/S-adenosylhomocysteine deaminase 1</fullName>
        <shortName evidence="1">MTA/SAH deaminase 1</shortName>
        <ecNumber evidence="1">3.5.4.28</ecNumber>
        <ecNumber evidence="1">3.5.4.31</ecNumber>
    </recommendedName>
</protein>
<accession>Q2LTB7</accession>